<keyword id="KW-0227">DNA damage</keyword>
<keyword id="KW-0233">DNA recombination</keyword>
<keyword id="KW-0234">DNA repair</keyword>
<evidence type="ECO:0000255" key="1">
    <source>
        <dbReference type="HAMAP-Rule" id="MF_00201"/>
    </source>
</evidence>
<sequence>MSEGLQRCFVLHRRPYSESSLILDVFSEEYGRVTLMSKGARSKRSNLKGALQPFTPLLLKWSGNGSMKTLRQAEPISLGLPLAGINLYSAMYVNELVGRVLMAEVAMPAFFHDYLHALTELAHNENPEPALRRFELALLSAMGYGVDFLHCAGTGEAIDPSMTYRYREQKGFIASVRRDNLTFMGDELIAISERRFITKEQLKAAKRFTRIALKPYLGGKPLKSRELFMPTIALSRARSIGK</sequence>
<accession>B7VK77</accession>
<reference key="1">
    <citation type="submission" date="2009-02" db="EMBL/GenBank/DDBJ databases">
        <title>Vibrio splendidus str. LGP32 complete genome.</title>
        <authorList>
            <person name="Mazel D."/>
            <person name="Le Roux F."/>
        </authorList>
    </citation>
    <scope>NUCLEOTIDE SEQUENCE [LARGE SCALE GENOMIC DNA]</scope>
    <source>
        <strain>LGP32</strain>
    </source>
</reference>
<name>RECO_VIBA3</name>
<dbReference type="EMBL" id="FM954972">
    <property type="protein sequence ID" value="CAV19825.1"/>
    <property type="molecule type" value="Genomic_DNA"/>
</dbReference>
<dbReference type="SMR" id="B7VK77"/>
<dbReference type="STRING" id="575788.VS_2617"/>
<dbReference type="KEGG" id="vsp:VS_2617"/>
<dbReference type="eggNOG" id="COG1381">
    <property type="taxonomic scope" value="Bacteria"/>
</dbReference>
<dbReference type="HOGENOM" id="CLU_066645_1_0_6"/>
<dbReference type="Proteomes" id="UP000009100">
    <property type="component" value="Chromosome 1"/>
</dbReference>
<dbReference type="GO" id="GO:0043590">
    <property type="term" value="C:bacterial nucleoid"/>
    <property type="evidence" value="ECO:0007669"/>
    <property type="project" value="TreeGrafter"/>
</dbReference>
<dbReference type="GO" id="GO:0006310">
    <property type="term" value="P:DNA recombination"/>
    <property type="evidence" value="ECO:0007669"/>
    <property type="project" value="UniProtKB-UniRule"/>
</dbReference>
<dbReference type="GO" id="GO:0006302">
    <property type="term" value="P:double-strand break repair"/>
    <property type="evidence" value="ECO:0007669"/>
    <property type="project" value="TreeGrafter"/>
</dbReference>
<dbReference type="Gene3D" id="2.40.50.140">
    <property type="entry name" value="Nucleic acid-binding proteins"/>
    <property type="match status" value="1"/>
</dbReference>
<dbReference type="Gene3D" id="1.20.1440.120">
    <property type="entry name" value="Recombination protein O, C-terminal domain"/>
    <property type="match status" value="1"/>
</dbReference>
<dbReference type="HAMAP" id="MF_00201">
    <property type="entry name" value="RecO"/>
    <property type="match status" value="1"/>
</dbReference>
<dbReference type="InterPro" id="IPR037278">
    <property type="entry name" value="ARFGAP/RecO"/>
</dbReference>
<dbReference type="InterPro" id="IPR022572">
    <property type="entry name" value="DNA_rep/recomb_RecO_N"/>
</dbReference>
<dbReference type="InterPro" id="IPR012340">
    <property type="entry name" value="NA-bd_OB-fold"/>
</dbReference>
<dbReference type="InterPro" id="IPR003717">
    <property type="entry name" value="RecO"/>
</dbReference>
<dbReference type="InterPro" id="IPR042242">
    <property type="entry name" value="RecO_C"/>
</dbReference>
<dbReference type="NCBIfam" id="TIGR00613">
    <property type="entry name" value="reco"/>
    <property type="match status" value="1"/>
</dbReference>
<dbReference type="PANTHER" id="PTHR33991">
    <property type="entry name" value="DNA REPAIR PROTEIN RECO"/>
    <property type="match status" value="1"/>
</dbReference>
<dbReference type="PANTHER" id="PTHR33991:SF1">
    <property type="entry name" value="DNA REPAIR PROTEIN RECO"/>
    <property type="match status" value="1"/>
</dbReference>
<dbReference type="Pfam" id="PF02565">
    <property type="entry name" value="RecO_C"/>
    <property type="match status" value="1"/>
</dbReference>
<dbReference type="Pfam" id="PF11967">
    <property type="entry name" value="RecO_N"/>
    <property type="match status" value="1"/>
</dbReference>
<dbReference type="SUPFAM" id="SSF57863">
    <property type="entry name" value="ArfGap/RecO-like zinc finger"/>
    <property type="match status" value="1"/>
</dbReference>
<dbReference type="SUPFAM" id="SSF50249">
    <property type="entry name" value="Nucleic acid-binding proteins"/>
    <property type="match status" value="1"/>
</dbReference>
<protein>
    <recommendedName>
        <fullName evidence="1">DNA repair protein RecO</fullName>
    </recommendedName>
    <alternativeName>
        <fullName evidence="1">Recombination protein O</fullName>
    </alternativeName>
</protein>
<proteinExistence type="inferred from homology"/>
<comment type="function">
    <text evidence="1">Involved in DNA repair and RecF pathway recombination.</text>
</comment>
<comment type="similarity">
    <text evidence="1">Belongs to the RecO family.</text>
</comment>
<gene>
    <name evidence="1" type="primary">recO</name>
    <name type="ordered locus">VS_2617</name>
</gene>
<organism>
    <name type="scientific">Vibrio atlanticus (strain LGP32)</name>
    <name type="common">Vibrio splendidus (strain Mel32)</name>
    <dbReference type="NCBI Taxonomy" id="575788"/>
    <lineage>
        <taxon>Bacteria</taxon>
        <taxon>Pseudomonadati</taxon>
        <taxon>Pseudomonadota</taxon>
        <taxon>Gammaproteobacteria</taxon>
        <taxon>Vibrionales</taxon>
        <taxon>Vibrionaceae</taxon>
        <taxon>Vibrio</taxon>
    </lineage>
</organism>
<feature type="chain" id="PRO_1000193432" description="DNA repair protein RecO">
    <location>
        <begin position="1"/>
        <end position="242"/>
    </location>
</feature>